<keyword id="KW-0067">ATP-binding</keyword>
<keyword id="KW-0963">Cytoplasm</keyword>
<keyword id="KW-0418">Kinase</keyword>
<keyword id="KW-0547">Nucleotide-binding</keyword>
<keyword id="KW-0808">Transferase</keyword>
<reference key="1">
    <citation type="journal article" date="1988" name="Biochemistry">
        <title>Gene cloning and sequence determination of leucine dehydrogenase from Bacillus stearothermophilus and structural comparison with other NAD(P)+-dependent dehydrogenases.</title>
        <authorList>
            <person name="Nagata S."/>
            <person name="Tanizawa K."/>
            <person name="Esaki N."/>
            <person name="Sakamoto Y."/>
            <person name="Ohshima T."/>
            <person name="Tanaka H."/>
            <person name="Soda K."/>
        </authorList>
    </citation>
    <scope>NUCLEOTIDE SEQUENCE [GENOMIC DNA]</scope>
    <source>
        <strain>ATCC 12980 / DSM 22 / CCM 2062 / JCM 2501 / NBRC 12550 / NCIMB 8923 / NCTC 10339 / R-35646 / VKM B-510</strain>
    </source>
</reference>
<sequence>MQEQKFRILTINPGSTSTKIGVFENERAIVEKTIRHEGRCFGNIKR</sequence>
<comment type="catalytic activity">
    <reaction>
        <text>butanoate + ATP = butanoyl phosphate + ADP</text>
        <dbReference type="Rhea" id="RHEA:13585"/>
        <dbReference type="ChEBI" id="CHEBI:17968"/>
        <dbReference type="ChEBI" id="CHEBI:30616"/>
        <dbReference type="ChEBI" id="CHEBI:58079"/>
        <dbReference type="ChEBI" id="CHEBI:456216"/>
        <dbReference type="EC" id="2.7.2.7"/>
    </reaction>
</comment>
<comment type="subcellular location">
    <subcellularLocation>
        <location evidence="1">Cytoplasm</location>
    </subcellularLocation>
</comment>
<comment type="similarity">
    <text evidence="2">Belongs to the acetokinase family.</text>
</comment>
<comment type="sequence caution" evidence="2">
    <conflict type="frameshift">
        <sequence resource="EMBL-CDS" id="AAA22570"/>
    </conflict>
</comment>
<proteinExistence type="inferred from homology"/>
<evidence type="ECO:0000250" key="1"/>
<evidence type="ECO:0000305" key="2"/>
<dbReference type="EC" id="2.7.2.7"/>
<dbReference type="EMBL" id="M22977">
    <property type="protein sequence ID" value="AAA22570.1"/>
    <property type="status" value="ALT_FRAME"/>
    <property type="molecule type" value="Genomic_DNA"/>
</dbReference>
<dbReference type="SMR" id="P54621"/>
<dbReference type="GO" id="GO:0005737">
    <property type="term" value="C:cytoplasm"/>
    <property type="evidence" value="ECO:0007669"/>
    <property type="project" value="UniProtKB-SubCell"/>
</dbReference>
<dbReference type="GO" id="GO:0005524">
    <property type="term" value="F:ATP binding"/>
    <property type="evidence" value="ECO:0007669"/>
    <property type="project" value="UniProtKB-KW"/>
</dbReference>
<dbReference type="GO" id="GO:0047761">
    <property type="term" value="F:butyrate kinase activity"/>
    <property type="evidence" value="ECO:0007669"/>
    <property type="project" value="UniProtKB-EC"/>
</dbReference>
<dbReference type="Gene3D" id="3.30.420.40">
    <property type="match status" value="1"/>
</dbReference>
<dbReference type="InterPro" id="IPR023865">
    <property type="entry name" value="Aliphatic_acid_kinase_CS"/>
</dbReference>
<dbReference type="InterPro" id="IPR043129">
    <property type="entry name" value="ATPase_NBD"/>
</dbReference>
<dbReference type="SUPFAM" id="SSF53067">
    <property type="entry name" value="Actin-like ATPase domain"/>
    <property type="match status" value="1"/>
</dbReference>
<dbReference type="PROSITE" id="PS01075">
    <property type="entry name" value="ACETATE_KINASE_1"/>
    <property type="match status" value="1"/>
</dbReference>
<accession>P54621</accession>
<gene>
    <name type="primary">buk</name>
</gene>
<protein>
    <recommendedName>
        <fullName>Probable butyrate kinase</fullName>
        <shortName>BK</shortName>
        <ecNumber>2.7.2.7</ecNumber>
    </recommendedName>
    <alternativeName>
        <fullName>Branched-chain carboxylic acid kinase</fullName>
    </alternativeName>
</protein>
<organism>
    <name type="scientific">Geobacillus stearothermophilus</name>
    <name type="common">Bacillus stearothermophilus</name>
    <dbReference type="NCBI Taxonomy" id="1422"/>
    <lineage>
        <taxon>Bacteria</taxon>
        <taxon>Bacillati</taxon>
        <taxon>Bacillota</taxon>
        <taxon>Bacilli</taxon>
        <taxon>Bacillales</taxon>
        <taxon>Anoxybacillaceae</taxon>
        <taxon>Geobacillus</taxon>
    </lineage>
</organism>
<feature type="chain" id="PRO_0000107665" description="Probable butyrate kinase">
    <location>
        <begin position="1"/>
        <end position="46" status="greater than"/>
    </location>
</feature>
<feature type="non-terminal residue">
    <location>
        <position position="46"/>
    </location>
</feature>
<name>BUK_GEOSE</name>